<comment type="function">
    <text evidence="1">Usually encoded in the trnK tRNA gene intron. Probably assists in splicing its own and other chloroplast group II introns.</text>
</comment>
<comment type="subcellular location">
    <subcellularLocation>
        <location>Plastid</location>
        <location>Chloroplast</location>
    </subcellularLocation>
</comment>
<comment type="similarity">
    <text evidence="1">Belongs to the intron maturase 2 family. MatK subfamily.</text>
</comment>
<comment type="sequence caution" evidence="2">
    <conflict type="erroneous initiation">
        <sequence resource="EMBL-CDS" id="BAF50178"/>
    </conflict>
</comment>
<protein>
    <recommendedName>
        <fullName evidence="1">Maturase K</fullName>
    </recommendedName>
    <alternativeName>
        <fullName evidence="1">Intron maturase</fullName>
    </alternativeName>
</protein>
<geneLocation type="chloroplast"/>
<proteinExistence type="inferred from homology"/>
<evidence type="ECO:0000255" key="1">
    <source>
        <dbReference type="HAMAP-Rule" id="MF_01390"/>
    </source>
</evidence>
<evidence type="ECO:0000305" key="2"/>
<organism>
    <name type="scientific">Capsella bursa-pastoris</name>
    <name type="common">Shepherd's purse</name>
    <name type="synonym">Thlaspi bursa-pastoris</name>
    <dbReference type="NCBI Taxonomy" id="3719"/>
    <lineage>
        <taxon>Eukaryota</taxon>
        <taxon>Viridiplantae</taxon>
        <taxon>Streptophyta</taxon>
        <taxon>Embryophyta</taxon>
        <taxon>Tracheophyta</taxon>
        <taxon>Spermatophyta</taxon>
        <taxon>Magnoliopsida</taxon>
        <taxon>eudicotyledons</taxon>
        <taxon>Gunneridae</taxon>
        <taxon>Pentapetalae</taxon>
        <taxon>rosids</taxon>
        <taxon>malvids</taxon>
        <taxon>Brassicales</taxon>
        <taxon>Brassicaceae</taxon>
        <taxon>Camelineae</taxon>
        <taxon>Capsella</taxon>
    </lineage>
</organism>
<name>MATK_CAPBU</name>
<feature type="chain" id="PRO_0000355918" description="Maturase K">
    <location>
        <begin position="1"/>
        <end position="504"/>
    </location>
</feature>
<reference key="1">
    <citation type="submission" date="2007-03" db="EMBL/GenBank/DDBJ databases">
        <title>Sequencing analysis of Capsella bursa-pastoris JO22 chloroplast DNA.</title>
        <authorList>
            <person name="Hosouchi T."/>
            <person name="Tsuruoka H."/>
            <person name="Kotani H."/>
        </authorList>
    </citation>
    <scope>NUCLEOTIDE SEQUENCE [LARGE SCALE GENOMIC DNA]</scope>
</reference>
<dbReference type="EMBL" id="AP009371">
    <property type="protein sequence ID" value="BAF50178.1"/>
    <property type="status" value="ALT_INIT"/>
    <property type="molecule type" value="Genomic_DNA"/>
</dbReference>
<dbReference type="RefSeq" id="YP_001123354.1">
    <property type="nucleotide sequence ID" value="NC_009270.1"/>
</dbReference>
<dbReference type="GeneID" id="4961618"/>
<dbReference type="GO" id="GO:0009507">
    <property type="term" value="C:chloroplast"/>
    <property type="evidence" value="ECO:0007669"/>
    <property type="project" value="UniProtKB-SubCell"/>
</dbReference>
<dbReference type="GO" id="GO:0003723">
    <property type="term" value="F:RNA binding"/>
    <property type="evidence" value="ECO:0007669"/>
    <property type="project" value="UniProtKB-KW"/>
</dbReference>
<dbReference type="GO" id="GO:0006397">
    <property type="term" value="P:mRNA processing"/>
    <property type="evidence" value="ECO:0007669"/>
    <property type="project" value="UniProtKB-KW"/>
</dbReference>
<dbReference type="GO" id="GO:0008380">
    <property type="term" value="P:RNA splicing"/>
    <property type="evidence" value="ECO:0007669"/>
    <property type="project" value="UniProtKB-UniRule"/>
</dbReference>
<dbReference type="GO" id="GO:0008033">
    <property type="term" value="P:tRNA processing"/>
    <property type="evidence" value="ECO:0007669"/>
    <property type="project" value="UniProtKB-KW"/>
</dbReference>
<dbReference type="HAMAP" id="MF_01390">
    <property type="entry name" value="MatK"/>
    <property type="match status" value="1"/>
</dbReference>
<dbReference type="InterPro" id="IPR024937">
    <property type="entry name" value="Domain_X"/>
</dbReference>
<dbReference type="InterPro" id="IPR002866">
    <property type="entry name" value="Maturase_MatK"/>
</dbReference>
<dbReference type="InterPro" id="IPR024942">
    <property type="entry name" value="Maturase_MatK_N"/>
</dbReference>
<dbReference type="PANTHER" id="PTHR34811">
    <property type="entry name" value="MATURASE K"/>
    <property type="match status" value="1"/>
</dbReference>
<dbReference type="PANTHER" id="PTHR34811:SF1">
    <property type="entry name" value="MATURASE K"/>
    <property type="match status" value="1"/>
</dbReference>
<dbReference type="Pfam" id="PF01348">
    <property type="entry name" value="Intron_maturas2"/>
    <property type="match status" value="1"/>
</dbReference>
<dbReference type="Pfam" id="PF01824">
    <property type="entry name" value="MatK_N"/>
    <property type="match status" value="1"/>
</dbReference>
<keyword id="KW-0150">Chloroplast</keyword>
<keyword id="KW-0507">mRNA processing</keyword>
<keyword id="KW-0934">Plastid</keyword>
<keyword id="KW-0694">RNA-binding</keyword>
<keyword id="KW-0819">tRNA processing</keyword>
<sequence length="504" mass="60243">MEKFPGYLEFDGARQQSFLYPLFFREYIYVLAYDHGLNRLNRNRSFFLENTDYDKKYSSLIVKRLILRMYEQNRLIIPTKDLNQNSFLGHTSLFYYQMISVLFAVIVEIPFSKRLGSSFQGKQLKKSYNLQSIHSIFPFLEDKLAHFNCVLDVLIPYPIHLEILVQTLRYRVKDASSLHFFRFCLYEYCNWKNFDKKKKSILNPRFLLFLYNSHVCEYESIFFFLRKRSSHFRSTSYQVLFERILFYGKIQHFFKVFVNNFPAILGLLKDPFIHYVRYHGRCILATKDTPLLMNKWKYYFVNLWQCYFSLWFQSQKVNINQLSKDNLEFLGYLSSLRLNPLVVRSQMLENSFLIDNVRINLDSKIPISAIIGSLAKDKFCNVLGHPISKATWTDSSDSDILNRFVRICRNISHYYSGSSKKKNLYRIKYILRLCCVKTLARKHKSTVRAFLKRLGSGLLEEFLTGEDQVLSLIFPRSYYASKRLYRVRIWYLDIIYLNDLVNHE</sequence>
<gene>
    <name evidence="1" type="primary">matK</name>
</gene>
<accession>A4QKH3</accession>